<organism>
    <name type="scientific">Mycobacterium tuberculosis (strain ATCC 25177 / H37Ra)</name>
    <dbReference type="NCBI Taxonomy" id="419947"/>
    <lineage>
        <taxon>Bacteria</taxon>
        <taxon>Bacillati</taxon>
        <taxon>Actinomycetota</taxon>
        <taxon>Actinomycetes</taxon>
        <taxon>Mycobacteriales</taxon>
        <taxon>Mycobacteriaceae</taxon>
        <taxon>Mycobacterium</taxon>
        <taxon>Mycobacterium tuberculosis complex</taxon>
    </lineage>
</organism>
<sequence length="93" mass="10206">MSAPDVRLTAWVHGWVQGVGFRWWTRCRALELGLTGYAANHADGRVLVVAQGPRAACQKLLQLLQGDTTPGRVAKVVADWSQSTEQITGFSER</sequence>
<protein>
    <recommendedName>
        <fullName>Acylphosphatase</fullName>
        <ecNumber>3.6.1.7</ecNumber>
    </recommendedName>
    <alternativeName>
        <fullName>Acylphosphate phosphohydrolase</fullName>
    </alternativeName>
</protein>
<gene>
    <name type="primary">acyP</name>
    <name type="ordered locus">MRA_2948</name>
</gene>
<accession>A5U6S8</accession>
<evidence type="ECO:0000255" key="1">
    <source>
        <dbReference type="PROSITE-ProRule" id="PRU00520"/>
    </source>
</evidence>
<evidence type="ECO:0000305" key="2"/>
<feature type="chain" id="PRO_0000326754" description="Acylphosphatase">
    <location>
        <begin position="1"/>
        <end position="93"/>
    </location>
</feature>
<feature type="domain" description="Acylphosphatase-like" evidence="1">
    <location>
        <begin position="7"/>
        <end position="93"/>
    </location>
</feature>
<feature type="active site" evidence="1">
    <location>
        <position position="22"/>
    </location>
</feature>
<feature type="active site" evidence="1">
    <location>
        <position position="40"/>
    </location>
</feature>
<keyword id="KW-0378">Hydrolase</keyword>
<keyword id="KW-1185">Reference proteome</keyword>
<dbReference type="EC" id="3.6.1.7"/>
<dbReference type="EMBL" id="CP000611">
    <property type="protein sequence ID" value="ABQ74728.1"/>
    <property type="molecule type" value="Genomic_DNA"/>
</dbReference>
<dbReference type="RefSeq" id="WP_003414811.1">
    <property type="nucleotide sequence ID" value="NZ_CP016972.1"/>
</dbReference>
<dbReference type="SMR" id="A5U6S8"/>
<dbReference type="KEGG" id="mra:MRA_2948"/>
<dbReference type="eggNOG" id="COG1254">
    <property type="taxonomic scope" value="Bacteria"/>
</dbReference>
<dbReference type="HOGENOM" id="CLU_141932_3_0_11"/>
<dbReference type="Proteomes" id="UP000001988">
    <property type="component" value="Chromosome"/>
</dbReference>
<dbReference type="GO" id="GO:0003998">
    <property type="term" value="F:acylphosphatase activity"/>
    <property type="evidence" value="ECO:0007669"/>
    <property type="project" value="UniProtKB-EC"/>
</dbReference>
<dbReference type="Gene3D" id="3.30.70.100">
    <property type="match status" value="1"/>
</dbReference>
<dbReference type="InterPro" id="IPR020456">
    <property type="entry name" value="Acylphosphatase"/>
</dbReference>
<dbReference type="InterPro" id="IPR001792">
    <property type="entry name" value="Acylphosphatase-like_dom"/>
</dbReference>
<dbReference type="InterPro" id="IPR036046">
    <property type="entry name" value="Acylphosphatase-like_dom_sf"/>
</dbReference>
<dbReference type="InterPro" id="IPR017968">
    <property type="entry name" value="Acylphosphatase_CS"/>
</dbReference>
<dbReference type="NCBIfam" id="NF010997">
    <property type="entry name" value="PRK14422.1"/>
    <property type="match status" value="1"/>
</dbReference>
<dbReference type="PANTHER" id="PTHR47268">
    <property type="entry name" value="ACYLPHOSPHATASE"/>
    <property type="match status" value="1"/>
</dbReference>
<dbReference type="PANTHER" id="PTHR47268:SF4">
    <property type="entry name" value="ACYLPHOSPHATASE"/>
    <property type="match status" value="1"/>
</dbReference>
<dbReference type="Pfam" id="PF00708">
    <property type="entry name" value="Acylphosphatase"/>
    <property type="match status" value="1"/>
</dbReference>
<dbReference type="SUPFAM" id="SSF54975">
    <property type="entry name" value="Acylphosphatase/BLUF domain-like"/>
    <property type="match status" value="1"/>
</dbReference>
<dbReference type="PROSITE" id="PS00150">
    <property type="entry name" value="ACYLPHOSPHATASE_1"/>
    <property type="match status" value="1"/>
</dbReference>
<dbReference type="PROSITE" id="PS00151">
    <property type="entry name" value="ACYLPHOSPHATASE_2"/>
    <property type="match status" value="1"/>
</dbReference>
<dbReference type="PROSITE" id="PS51160">
    <property type="entry name" value="ACYLPHOSPHATASE_3"/>
    <property type="match status" value="1"/>
</dbReference>
<proteinExistence type="inferred from homology"/>
<comment type="catalytic activity">
    <reaction>
        <text>an acyl phosphate + H2O = a carboxylate + phosphate + H(+)</text>
        <dbReference type="Rhea" id="RHEA:14965"/>
        <dbReference type="ChEBI" id="CHEBI:15377"/>
        <dbReference type="ChEBI" id="CHEBI:15378"/>
        <dbReference type="ChEBI" id="CHEBI:29067"/>
        <dbReference type="ChEBI" id="CHEBI:43474"/>
        <dbReference type="ChEBI" id="CHEBI:59918"/>
        <dbReference type="EC" id="3.6.1.7"/>
    </reaction>
</comment>
<comment type="similarity">
    <text evidence="2">Belongs to the acylphosphatase family.</text>
</comment>
<reference key="1">
    <citation type="journal article" date="2008" name="PLoS ONE">
        <title>Genetic basis of virulence attenuation revealed by comparative genomic analysis of Mycobacterium tuberculosis strain H37Ra versus H37Rv.</title>
        <authorList>
            <person name="Zheng H."/>
            <person name="Lu L."/>
            <person name="Wang B."/>
            <person name="Pu S."/>
            <person name="Zhang X."/>
            <person name="Zhu G."/>
            <person name="Shi W."/>
            <person name="Zhang L."/>
            <person name="Wang H."/>
            <person name="Wang S."/>
            <person name="Zhao G."/>
            <person name="Zhang Y."/>
        </authorList>
    </citation>
    <scope>NUCLEOTIDE SEQUENCE [LARGE SCALE GENOMIC DNA]</scope>
    <source>
        <strain>ATCC 25177 / H37Ra</strain>
    </source>
</reference>
<name>ACYP_MYCTA</name>